<comment type="function">
    <text evidence="1">PPIases accelerate the folding of proteins. It catalyzes the cis-trans isomerization of proline imidic peptide bonds in oligopeptides (By similarity).</text>
</comment>
<comment type="catalytic activity">
    <reaction>
        <text>[protein]-peptidylproline (omega=180) = [protein]-peptidylproline (omega=0)</text>
        <dbReference type="Rhea" id="RHEA:16237"/>
        <dbReference type="Rhea" id="RHEA-COMP:10747"/>
        <dbReference type="Rhea" id="RHEA-COMP:10748"/>
        <dbReference type="ChEBI" id="CHEBI:83833"/>
        <dbReference type="ChEBI" id="CHEBI:83834"/>
        <dbReference type="EC" id="5.2.1.8"/>
    </reaction>
</comment>
<comment type="similarity">
    <text evidence="3">Belongs to the cyclophilin-type PPIase family.</text>
</comment>
<evidence type="ECO:0000250" key="1"/>
<evidence type="ECO:0000255" key="2">
    <source>
        <dbReference type="PROSITE-ProRule" id="PRU00156"/>
    </source>
</evidence>
<evidence type="ECO:0000305" key="3"/>
<name>PPI1_STAES</name>
<proteinExistence type="inferred from homology"/>
<organism>
    <name type="scientific">Staphylococcus epidermidis (strain ATCC 12228 / FDA PCI 1200)</name>
    <dbReference type="NCBI Taxonomy" id="176280"/>
    <lineage>
        <taxon>Bacteria</taxon>
        <taxon>Bacillati</taxon>
        <taxon>Bacillota</taxon>
        <taxon>Bacilli</taxon>
        <taxon>Bacillales</taxon>
        <taxon>Staphylococcaceae</taxon>
        <taxon>Staphylococcus</taxon>
    </lineage>
</organism>
<dbReference type="EC" id="5.2.1.8"/>
<dbReference type="EMBL" id="AE015929">
    <property type="protein sequence ID" value="AAO04245.1"/>
    <property type="molecule type" value="Genomic_DNA"/>
</dbReference>
<dbReference type="RefSeq" id="NP_764203.1">
    <property type="nucleotide sequence ID" value="NC_004461.1"/>
</dbReference>
<dbReference type="RefSeq" id="WP_001831922.1">
    <property type="nucleotide sequence ID" value="NZ_WBME01000044.1"/>
</dbReference>
<dbReference type="SMR" id="Q8CT84"/>
<dbReference type="KEGG" id="sep:SE_0648"/>
<dbReference type="PATRIC" id="fig|176280.10.peg.621"/>
<dbReference type="eggNOG" id="COG0652">
    <property type="taxonomic scope" value="Bacteria"/>
</dbReference>
<dbReference type="HOGENOM" id="CLU_012062_16_0_9"/>
<dbReference type="OrthoDB" id="9807797at2"/>
<dbReference type="Proteomes" id="UP000001411">
    <property type="component" value="Chromosome"/>
</dbReference>
<dbReference type="GO" id="GO:0003755">
    <property type="term" value="F:peptidyl-prolyl cis-trans isomerase activity"/>
    <property type="evidence" value="ECO:0007669"/>
    <property type="project" value="UniProtKB-KW"/>
</dbReference>
<dbReference type="GO" id="GO:0006457">
    <property type="term" value="P:protein folding"/>
    <property type="evidence" value="ECO:0007669"/>
    <property type="project" value="InterPro"/>
</dbReference>
<dbReference type="Gene3D" id="2.40.100.10">
    <property type="entry name" value="Cyclophilin-like"/>
    <property type="match status" value="1"/>
</dbReference>
<dbReference type="InterPro" id="IPR029000">
    <property type="entry name" value="Cyclophilin-like_dom_sf"/>
</dbReference>
<dbReference type="InterPro" id="IPR024936">
    <property type="entry name" value="Cyclophilin-type_PPIase"/>
</dbReference>
<dbReference type="InterPro" id="IPR020892">
    <property type="entry name" value="Cyclophilin-type_PPIase_CS"/>
</dbReference>
<dbReference type="InterPro" id="IPR002130">
    <property type="entry name" value="Cyclophilin-type_PPIase_dom"/>
</dbReference>
<dbReference type="InterPro" id="IPR044666">
    <property type="entry name" value="Cyclophilin_A-like"/>
</dbReference>
<dbReference type="PANTHER" id="PTHR45625">
    <property type="entry name" value="PEPTIDYL-PROLYL CIS-TRANS ISOMERASE-RELATED"/>
    <property type="match status" value="1"/>
</dbReference>
<dbReference type="PANTHER" id="PTHR45625:SF4">
    <property type="entry name" value="PEPTIDYLPROLYL ISOMERASE DOMAIN AND WD REPEAT-CONTAINING PROTEIN 1"/>
    <property type="match status" value="1"/>
</dbReference>
<dbReference type="Pfam" id="PF00160">
    <property type="entry name" value="Pro_isomerase"/>
    <property type="match status" value="1"/>
</dbReference>
<dbReference type="PIRSF" id="PIRSF001467">
    <property type="entry name" value="Peptidylpro_ismrse"/>
    <property type="match status" value="1"/>
</dbReference>
<dbReference type="PRINTS" id="PR00153">
    <property type="entry name" value="CSAPPISMRASE"/>
</dbReference>
<dbReference type="SUPFAM" id="SSF50891">
    <property type="entry name" value="Cyclophilin-like"/>
    <property type="match status" value="1"/>
</dbReference>
<dbReference type="PROSITE" id="PS00170">
    <property type="entry name" value="CSA_PPIASE_1"/>
    <property type="match status" value="1"/>
</dbReference>
<dbReference type="PROSITE" id="PS50072">
    <property type="entry name" value="CSA_PPIASE_2"/>
    <property type="match status" value="1"/>
</dbReference>
<feature type="chain" id="PRO_0000299089" description="Putative peptidyl-prolyl cis-trans isomerase">
    <location>
        <begin position="1"/>
        <end position="197"/>
    </location>
</feature>
<feature type="domain" description="PPIase cyclophilin-type" evidence="2">
    <location>
        <begin position="14"/>
        <end position="195"/>
    </location>
</feature>
<gene>
    <name type="ordered locus">SE_0648</name>
</gene>
<protein>
    <recommendedName>
        <fullName>Putative peptidyl-prolyl cis-trans isomerase</fullName>
        <shortName>PPIase</shortName>
        <ecNumber>5.2.1.8</ecNumber>
    </recommendedName>
    <alternativeName>
        <fullName>Rotamase</fullName>
    </alternativeName>
</protein>
<sequence>MTNYPQLNKEIQDNEIKVVMHTNKGDMTFKLFPDIAPKTVENFVTHSKNGYYDGVTFHRVINDFMVQGGDPTATGMGGESIYGSAFEDEFSLEAFNLYGALSMANAGPNTNGSQFFIVQMKEVPENMLSQLADGGWPQPIVEAYGEKGGTPWLDQKHTVFGQLIEGESTLEDIANTKVGAQDKPVYDVVIESIDVEE</sequence>
<reference key="1">
    <citation type="journal article" date="2003" name="Mol. Microbiol.">
        <title>Genome-based analysis of virulence genes in a non-biofilm-forming Staphylococcus epidermidis strain (ATCC 12228).</title>
        <authorList>
            <person name="Zhang Y.-Q."/>
            <person name="Ren S.-X."/>
            <person name="Li H.-L."/>
            <person name="Wang Y.-X."/>
            <person name="Fu G."/>
            <person name="Yang J."/>
            <person name="Qin Z.-Q."/>
            <person name="Miao Y.-G."/>
            <person name="Wang W.-Y."/>
            <person name="Chen R.-S."/>
            <person name="Shen Y."/>
            <person name="Chen Z."/>
            <person name="Yuan Z.-H."/>
            <person name="Zhao G.-P."/>
            <person name="Qu D."/>
            <person name="Danchin A."/>
            <person name="Wen Y.-M."/>
        </authorList>
    </citation>
    <scope>NUCLEOTIDE SEQUENCE [LARGE SCALE GENOMIC DNA]</scope>
    <source>
        <strain>ATCC 12228 / FDA PCI 1200</strain>
    </source>
</reference>
<accession>Q8CT84</accession>
<keyword id="KW-0413">Isomerase</keyword>
<keyword id="KW-0697">Rotamase</keyword>